<comment type="function">
    <text evidence="1">Phosphoinositides-binding protein that induces the formation of planar or gently curved membrane structures.</text>
</comment>
<comment type="subcellular location">
    <subcellularLocation>
        <location evidence="1">Cell membrane</location>
        <topology evidence="1">Peripheral membrane protein</topology>
    </subcellularLocation>
</comment>
<comment type="domain">
    <text evidence="1">The IMD domain is predicted to have a helical structure. It may induce actin bundling and filopodia formation (By similarity).</text>
</comment>
<evidence type="ECO:0000250" key="1"/>
<evidence type="ECO:0000250" key="2">
    <source>
        <dbReference type="UniProtKB" id="Q6UXY1"/>
    </source>
</evidence>
<evidence type="ECO:0000255" key="3">
    <source>
        <dbReference type="PROSITE-ProRule" id="PRU00192"/>
    </source>
</evidence>
<evidence type="ECO:0000255" key="4">
    <source>
        <dbReference type="PROSITE-ProRule" id="PRU00668"/>
    </source>
</evidence>
<evidence type="ECO:0000256" key="5">
    <source>
        <dbReference type="SAM" id="MobiDB-lite"/>
    </source>
</evidence>
<evidence type="ECO:0000305" key="6"/>
<proteinExistence type="inferred from homology"/>
<gene>
    <name type="primary">baiap2l2</name>
    <name type="ORF">si:dkey-205o12.6</name>
    <name type="ORF">si:dkey-232h18.1</name>
</gene>
<dbReference type="EMBL" id="BX571946">
    <property type="protein sequence ID" value="CAK10744.1"/>
    <property type="molecule type" value="Genomic_DNA"/>
</dbReference>
<dbReference type="EMBL" id="BX571961">
    <property type="protein sequence ID" value="CAK05382.1"/>
    <property type="molecule type" value="Genomic_DNA"/>
</dbReference>
<dbReference type="RefSeq" id="NP_001074273.1">
    <property type="nucleotide sequence ID" value="NM_001080804.1"/>
</dbReference>
<dbReference type="SMR" id="Q1LWE6"/>
<dbReference type="FunCoup" id="Q1LWE6">
    <property type="interactions" value="386"/>
</dbReference>
<dbReference type="STRING" id="7955.ENSDARP00000122562"/>
<dbReference type="PaxDb" id="7955-ENSDARP00000122562"/>
<dbReference type="GeneID" id="564798"/>
<dbReference type="KEGG" id="dre:564798"/>
<dbReference type="AGR" id="ZFIN:ZDB-GENE-060503-339"/>
<dbReference type="CTD" id="564798"/>
<dbReference type="ZFIN" id="ZDB-GENE-060503-339">
    <property type="gene designation" value="baiap2l2b"/>
</dbReference>
<dbReference type="eggNOG" id="ENOG502QW6V">
    <property type="taxonomic scope" value="Eukaryota"/>
</dbReference>
<dbReference type="InParanoid" id="Q1LWE6"/>
<dbReference type="OrthoDB" id="9944156at2759"/>
<dbReference type="PhylomeDB" id="Q1LWE6"/>
<dbReference type="Reactome" id="R-DRE-9035034">
    <property type="pathway name" value="RHOF GTPase cycle"/>
</dbReference>
<dbReference type="PRO" id="PR:Q1LWE6"/>
<dbReference type="Proteomes" id="UP000000437">
    <property type="component" value="Alternate scaffold 22"/>
</dbReference>
<dbReference type="Proteomes" id="UP000000437">
    <property type="component" value="Chromosome 22"/>
</dbReference>
<dbReference type="GO" id="GO:0005829">
    <property type="term" value="C:cytosol"/>
    <property type="evidence" value="ECO:0000318"/>
    <property type="project" value="GO_Central"/>
</dbReference>
<dbReference type="GO" id="GO:0005654">
    <property type="term" value="C:nucleoplasm"/>
    <property type="evidence" value="ECO:0000318"/>
    <property type="project" value="GO_Central"/>
</dbReference>
<dbReference type="GO" id="GO:0005886">
    <property type="term" value="C:plasma membrane"/>
    <property type="evidence" value="ECO:0007669"/>
    <property type="project" value="UniProtKB-SubCell"/>
</dbReference>
<dbReference type="GO" id="GO:0008289">
    <property type="term" value="F:lipid binding"/>
    <property type="evidence" value="ECO:0007669"/>
    <property type="project" value="UniProtKB-KW"/>
</dbReference>
<dbReference type="GO" id="GO:0051764">
    <property type="term" value="P:actin crosslink formation"/>
    <property type="evidence" value="ECO:0000318"/>
    <property type="project" value="GO_Central"/>
</dbReference>
<dbReference type="GO" id="GO:0051017">
    <property type="term" value="P:actin filament bundle assembly"/>
    <property type="evidence" value="ECO:0000318"/>
    <property type="project" value="GO_Central"/>
</dbReference>
<dbReference type="GO" id="GO:0007009">
    <property type="term" value="P:plasma membrane organization"/>
    <property type="evidence" value="ECO:0007669"/>
    <property type="project" value="InterPro"/>
</dbReference>
<dbReference type="GO" id="GO:0030838">
    <property type="term" value="P:positive regulation of actin filament polymerization"/>
    <property type="evidence" value="ECO:0000318"/>
    <property type="project" value="GO_Central"/>
</dbReference>
<dbReference type="CDD" id="cd07644">
    <property type="entry name" value="I-BAR_IMD_BAIAP2L2"/>
    <property type="match status" value="1"/>
</dbReference>
<dbReference type="CDD" id="cd11914">
    <property type="entry name" value="SH3_BAIAP2L2"/>
    <property type="match status" value="1"/>
</dbReference>
<dbReference type="FunFam" id="1.20.1270.60:FF:000084">
    <property type="entry name" value="BAI1-associated protein 2-like 2b"/>
    <property type="match status" value="1"/>
</dbReference>
<dbReference type="Gene3D" id="1.20.1270.60">
    <property type="entry name" value="Arfaptin homology (AH) domain/BAR domain"/>
    <property type="match status" value="1"/>
</dbReference>
<dbReference type="Gene3D" id="2.30.30.40">
    <property type="entry name" value="SH3 Domains"/>
    <property type="match status" value="1"/>
</dbReference>
<dbReference type="InterPro" id="IPR027267">
    <property type="entry name" value="AH/BAR_dom_sf"/>
</dbReference>
<dbReference type="InterPro" id="IPR030126">
    <property type="entry name" value="Baiap2l2_I-BAR_dom"/>
</dbReference>
<dbReference type="InterPro" id="IPR013606">
    <property type="entry name" value="I-BAR_dom"/>
</dbReference>
<dbReference type="InterPro" id="IPR027681">
    <property type="entry name" value="IRSp53/IRTKS/Pinkbar"/>
</dbReference>
<dbReference type="InterPro" id="IPR035593">
    <property type="entry name" value="Pinkbar_SH3"/>
</dbReference>
<dbReference type="InterPro" id="IPR036028">
    <property type="entry name" value="SH3-like_dom_sf"/>
</dbReference>
<dbReference type="InterPro" id="IPR001452">
    <property type="entry name" value="SH3_domain"/>
</dbReference>
<dbReference type="PANTHER" id="PTHR14206">
    <property type="entry name" value="BRAIN-SPECIFIC ANGIOGENESIS INHIBITOR 1-ASSOCIATED PROTEIN 2"/>
    <property type="match status" value="1"/>
</dbReference>
<dbReference type="PANTHER" id="PTHR14206:SF5">
    <property type="entry name" value="BRAIN-SPECIFIC ANGIOGENESIS INHIBITOR 1-ASSOCIATED PROTEIN 2-LIKE PROTEIN 2"/>
    <property type="match status" value="1"/>
</dbReference>
<dbReference type="Pfam" id="PF08397">
    <property type="entry name" value="IMD"/>
    <property type="match status" value="2"/>
</dbReference>
<dbReference type="Pfam" id="PF14604">
    <property type="entry name" value="SH3_9"/>
    <property type="match status" value="1"/>
</dbReference>
<dbReference type="SMART" id="SM00326">
    <property type="entry name" value="SH3"/>
    <property type="match status" value="1"/>
</dbReference>
<dbReference type="SUPFAM" id="SSF103657">
    <property type="entry name" value="BAR/IMD domain-like"/>
    <property type="match status" value="1"/>
</dbReference>
<dbReference type="SUPFAM" id="SSF50044">
    <property type="entry name" value="SH3-domain"/>
    <property type="match status" value="1"/>
</dbReference>
<dbReference type="PROSITE" id="PS51338">
    <property type="entry name" value="IMD"/>
    <property type="match status" value="1"/>
</dbReference>
<dbReference type="PROSITE" id="PS50002">
    <property type="entry name" value="SH3"/>
    <property type="match status" value="1"/>
</dbReference>
<organism>
    <name type="scientific">Danio rerio</name>
    <name type="common">Zebrafish</name>
    <name type="synonym">Brachydanio rerio</name>
    <dbReference type="NCBI Taxonomy" id="7955"/>
    <lineage>
        <taxon>Eukaryota</taxon>
        <taxon>Metazoa</taxon>
        <taxon>Chordata</taxon>
        <taxon>Craniata</taxon>
        <taxon>Vertebrata</taxon>
        <taxon>Euteleostomi</taxon>
        <taxon>Actinopterygii</taxon>
        <taxon>Neopterygii</taxon>
        <taxon>Teleostei</taxon>
        <taxon>Ostariophysi</taxon>
        <taxon>Cypriniformes</taxon>
        <taxon>Danionidae</taxon>
        <taxon>Danioninae</taxon>
        <taxon>Danio</taxon>
    </lineage>
</organism>
<name>BI2L2_DANRE</name>
<feature type="chain" id="PRO_0000256132" description="BAR/IMD domain-containing adapter protein 2-like 2">
    <location>
        <begin position="1"/>
        <end position="516"/>
    </location>
</feature>
<feature type="domain" description="IMD" evidence="4">
    <location>
        <begin position="1"/>
        <end position="227"/>
    </location>
</feature>
<feature type="domain" description="SH3" evidence="3">
    <location>
        <begin position="274"/>
        <end position="337"/>
    </location>
</feature>
<feature type="region of interest" description="Disordered" evidence="5">
    <location>
        <begin position="200"/>
        <end position="273"/>
    </location>
</feature>
<feature type="region of interest" description="Disordered" evidence="5">
    <location>
        <begin position="355"/>
        <end position="516"/>
    </location>
</feature>
<feature type="compositionally biased region" description="Basic and acidic residues" evidence="5">
    <location>
        <begin position="201"/>
        <end position="212"/>
    </location>
</feature>
<feature type="compositionally biased region" description="Polar residues" evidence="5">
    <location>
        <begin position="226"/>
        <end position="236"/>
    </location>
</feature>
<feature type="compositionally biased region" description="Basic and acidic residues" evidence="5">
    <location>
        <begin position="238"/>
        <end position="247"/>
    </location>
</feature>
<feature type="compositionally biased region" description="Low complexity" evidence="5">
    <location>
        <begin position="249"/>
        <end position="270"/>
    </location>
</feature>
<feature type="compositionally biased region" description="Polar residues" evidence="5">
    <location>
        <begin position="355"/>
        <end position="376"/>
    </location>
</feature>
<feature type="compositionally biased region" description="Basic and acidic residues" evidence="5">
    <location>
        <begin position="434"/>
        <end position="450"/>
    </location>
</feature>
<feature type="compositionally biased region" description="Pro residues" evidence="5">
    <location>
        <begin position="454"/>
        <end position="465"/>
    </location>
</feature>
<feature type="sequence conflict" description="In Ref. 1; CAK05382." evidence="6" ref="1">
    <original>I</original>
    <variation>M</variation>
    <location>
        <position position="345"/>
    </location>
</feature>
<feature type="sequence conflict" description="In Ref. 1; CAK05382." evidence="6" ref="1">
    <original>N</original>
    <variation>H</variation>
    <location>
        <position position="450"/>
    </location>
</feature>
<feature type="sequence conflict" description="In Ref. 1; CAK05382." evidence="6" ref="1">
    <original>L</original>
    <variation>S</variation>
    <location>
        <position position="473"/>
    </location>
</feature>
<protein>
    <recommendedName>
        <fullName evidence="2">BAR/IMD domain-containing adapter protein 2-like 2</fullName>
    </recommendedName>
    <alternativeName>
        <fullName>Brain-specific angiogenesis inhibitor 1-associated protein 2-like protein 2</fullName>
        <shortName>BAI1-associated protein 2-like protein 2</shortName>
    </alternativeName>
</protein>
<reference key="1">
    <citation type="journal article" date="2013" name="Nature">
        <title>The zebrafish reference genome sequence and its relationship to the human genome.</title>
        <authorList>
            <person name="Howe K."/>
            <person name="Clark M.D."/>
            <person name="Torroja C.F."/>
            <person name="Torrance J."/>
            <person name="Berthelot C."/>
            <person name="Muffato M."/>
            <person name="Collins J.E."/>
            <person name="Humphray S."/>
            <person name="McLaren K."/>
            <person name="Matthews L."/>
            <person name="McLaren S."/>
            <person name="Sealy I."/>
            <person name="Caccamo M."/>
            <person name="Churcher C."/>
            <person name="Scott C."/>
            <person name="Barrett J.C."/>
            <person name="Koch R."/>
            <person name="Rauch G.J."/>
            <person name="White S."/>
            <person name="Chow W."/>
            <person name="Kilian B."/>
            <person name="Quintais L.T."/>
            <person name="Guerra-Assuncao J.A."/>
            <person name="Zhou Y."/>
            <person name="Gu Y."/>
            <person name="Yen J."/>
            <person name="Vogel J.H."/>
            <person name="Eyre T."/>
            <person name="Redmond S."/>
            <person name="Banerjee R."/>
            <person name="Chi J."/>
            <person name="Fu B."/>
            <person name="Langley E."/>
            <person name="Maguire S.F."/>
            <person name="Laird G.K."/>
            <person name="Lloyd D."/>
            <person name="Kenyon E."/>
            <person name="Donaldson S."/>
            <person name="Sehra H."/>
            <person name="Almeida-King J."/>
            <person name="Loveland J."/>
            <person name="Trevanion S."/>
            <person name="Jones M."/>
            <person name="Quail M."/>
            <person name="Willey D."/>
            <person name="Hunt A."/>
            <person name="Burton J."/>
            <person name="Sims S."/>
            <person name="McLay K."/>
            <person name="Plumb B."/>
            <person name="Davis J."/>
            <person name="Clee C."/>
            <person name="Oliver K."/>
            <person name="Clark R."/>
            <person name="Riddle C."/>
            <person name="Elliot D."/>
            <person name="Threadgold G."/>
            <person name="Harden G."/>
            <person name="Ware D."/>
            <person name="Begum S."/>
            <person name="Mortimore B."/>
            <person name="Kerry G."/>
            <person name="Heath P."/>
            <person name="Phillimore B."/>
            <person name="Tracey A."/>
            <person name="Corby N."/>
            <person name="Dunn M."/>
            <person name="Johnson C."/>
            <person name="Wood J."/>
            <person name="Clark S."/>
            <person name="Pelan S."/>
            <person name="Griffiths G."/>
            <person name="Smith M."/>
            <person name="Glithero R."/>
            <person name="Howden P."/>
            <person name="Barker N."/>
            <person name="Lloyd C."/>
            <person name="Stevens C."/>
            <person name="Harley J."/>
            <person name="Holt K."/>
            <person name="Panagiotidis G."/>
            <person name="Lovell J."/>
            <person name="Beasley H."/>
            <person name="Henderson C."/>
            <person name="Gordon D."/>
            <person name="Auger K."/>
            <person name="Wright D."/>
            <person name="Collins J."/>
            <person name="Raisen C."/>
            <person name="Dyer L."/>
            <person name="Leung K."/>
            <person name="Robertson L."/>
            <person name="Ambridge K."/>
            <person name="Leongamornlert D."/>
            <person name="McGuire S."/>
            <person name="Gilderthorp R."/>
            <person name="Griffiths C."/>
            <person name="Manthravadi D."/>
            <person name="Nichol S."/>
            <person name="Barker G."/>
            <person name="Whitehead S."/>
            <person name="Kay M."/>
            <person name="Brown J."/>
            <person name="Murnane C."/>
            <person name="Gray E."/>
            <person name="Humphries M."/>
            <person name="Sycamore N."/>
            <person name="Barker D."/>
            <person name="Saunders D."/>
            <person name="Wallis J."/>
            <person name="Babbage A."/>
            <person name="Hammond S."/>
            <person name="Mashreghi-Mohammadi M."/>
            <person name="Barr L."/>
            <person name="Martin S."/>
            <person name="Wray P."/>
            <person name="Ellington A."/>
            <person name="Matthews N."/>
            <person name="Ellwood M."/>
            <person name="Woodmansey R."/>
            <person name="Clark G."/>
            <person name="Cooper J."/>
            <person name="Tromans A."/>
            <person name="Grafham D."/>
            <person name="Skuce C."/>
            <person name="Pandian R."/>
            <person name="Andrews R."/>
            <person name="Harrison E."/>
            <person name="Kimberley A."/>
            <person name="Garnett J."/>
            <person name="Fosker N."/>
            <person name="Hall R."/>
            <person name="Garner P."/>
            <person name="Kelly D."/>
            <person name="Bird C."/>
            <person name="Palmer S."/>
            <person name="Gehring I."/>
            <person name="Berger A."/>
            <person name="Dooley C.M."/>
            <person name="Ersan-Urun Z."/>
            <person name="Eser C."/>
            <person name="Geiger H."/>
            <person name="Geisler M."/>
            <person name="Karotki L."/>
            <person name="Kirn A."/>
            <person name="Konantz J."/>
            <person name="Konantz M."/>
            <person name="Oberlander M."/>
            <person name="Rudolph-Geiger S."/>
            <person name="Teucke M."/>
            <person name="Lanz C."/>
            <person name="Raddatz G."/>
            <person name="Osoegawa K."/>
            <person name="Zhu B."/>
            <person name="Rapp A."/>
            <person name="Widaa S."/>
            <person name="Langford C."/>
            <person name="Yang F."/>
            <person name="Schuster S.C."/>
            <person name="Carter N.P."/>
            <person name="Harrow J."/>
            <person name="Ning Z."/>
            <person name="Herrero J."/>
            <person name="Searle S.M."/>
            <person name="Enright A."/>
            <person name="Geisler R."/>
            <person name="Plasterk R.H."/>
            <person name="Lee C."/>
            <person name="Westerfield M."/>
            <person name="de Jong P.J."/>
            <person name="Zon L.I."/>
            <person name="Postlethwait J.H."/>
            <person name="Nusslein-Volhard C."/>
            <person name="Hubbard T.J."/>
            <person name="Roest Crollius H."/>
            <person name="Rogers J."/>
            <person name="Stemple D.L."/>
        </authorList>
    </citation>
    <scope>NUCLEOTIDE SEQUENCE [LARGE SCALE GENOMIC DNA]</scope>
    <source>
        <strain>Tuebingen</strain>
    </source>
</reference>
<accession>Q1LWE6</accession>
<accession>Q1LWD6</accession>
<keyword id="KW-1003">Cell membrane</keyword>
<keyword id="KW-0446">Lipid-binding</keyword>
<keyword id="KW-0472">Membrane</keyword>
<keyword id="KW-1185">Reference proteome</keyword>
<keyword id="KW-0728">SH3 domain</keyword>
<sequence>MSGVNSDLLHRSTLSVYNNLMDQFNPGLQKLVTLGNSYIKAFQALALTSEAYFSALAKMGEQALSTLSSRSLGDVLIQISETQRKLTAEAEGVFRWFHVEVLQAMDKNVKLDEEYIEGSRRVYELEVRNQAASLERQLRRGAFRDSLESSEYMQYLRQSQHEILKEEERRYRFLAEKHCGLTQSLLYLINKTGVSLQQRADGWKEKVSESRSSRPRTPTPLDQEAQLKSSVGSLLQTGDREMDREPLGRVPSRAPSPLPSRSRSSSVGESLGLGGGRSMRAIVSHPASSNPVLLPFARGDLLTVLIPEPRNGWLYGRHDPSLRQGWFPAAYVASTEDFLPVGLSISHRSHSMNNLLEPTSQSESDTQTYSEVSSPVVSMRRASADVRSVSPLPEKKTESNNELKSGQKVFHEIPAPATQLRRGSADVRSISPLPDRRAESHFESKVELKNYNELPPPAPPLPNSPLPERKTDLTSERPSTQGQPPEHPLFPRGSNPFATVKLRPTVTNDRSAPRIQ</sequence>